<protein>
    <recommendedName>
        <fullName evidence="1">Elongation factor 4</fullName>
        <shortName evidence="1">EF-4</shortName>
        <ecNumber evidence="1">3.6.5.n1</ecNumber>
    </recommendedName>
    <alternativeName>
        <fullName evidence="1">Ribosomal back-translocase LepA</fullName>
    </alternativeName>
</protein>
<name>LEPA_PARD8</name>
<keyword id="KW-0997">Cell inner membrane</keyword>
<keyword id="KW-1003">Cell membrane</keyword>
<keyword id="KW-0342">GTP-binding</keyword>
<keyword id="KW-0378">Hydrolase</keyword>
<keyword id="KW-0472">Membrane</keyword>
<keyword id="KW-0547">Nucleotide-binding</keyword>
<keyword id="KW-0648">Protein biosynthesis</keyword>
<keyword id="KW-1185">Reference proteome</keyword>
<proteinExistence type="inferred from homology"/>
<comment type="function">
    <text evidence="1">Required for accurate and efficient protein synthesis under certain stress conditions. May act as a fidelity factor of the translation reaction, by catalyzing a one-codon backward translocation of tRNAs on improperly translocated ribosomes. Back-translocation proceeds from a post-translocation (POST) complex to a pre-translocation (PRE) complex, thus giving elongation factor G a second chance to translocate the tRNAs correctly. Binds to ribosomes in a GTP-dependent manner.</text>
</comment>
<comment type="catalytic activity">
    <reaction evidence="1">
        <text>GTP + H2O = GDP + phosphate + H(+)</text>
        <dbReference type="Rhea" id="RHEA:19669"/>
        <dbReference type="ChEBI" id="CHEBI:15377"/>
        <dbReference type="ChEBI" id="CHEBI:15378"/>
        <dbReference type="ChEBI" id="CHEBI:37565"/>
        <dbReference type="ChEBI" id="CHEBI:43474"/>
        <dbReference type="ChEBI" id="CHEBI:58189"/>
        <dbReference type="EC" id="3.6.5.n1"/>
    </reaction>
</comment>
<comment type="subcellular location">
    <subcellularLocation>
        <location evidence="1">Cell inner membrane</location>
        <topology evidence="1">Peripheral membrane protein</topology>
        <orientation evidence="1">Cytoplasmic side</orientation>
    </subcellularLocation>
</comment>
<comment type="similarity">
    <text evidence="1">Belongs to the TRAFAC class translation factor GTPase superfamily. Classic translation factor GTPase family. LepA subfamily.</text>
</comment>
<organism>
    <name type="scientific">Parabacteroides distasonis (strain ATCC 8503 / DSM 20701 / CIP 104284 / JCM 5825 / NCTC 11152)</name>
    <dbReference type="NCBI Taxonomy" id="435591"/>
    <lineage>
        <taxon>Bacteria</taxon>
        <taxon>Pseudomonadati</taxon>
        <taxon>Bacteroidota</taxon>
        <taxon>Bacteroidia</taxon>
        <taxon>Bacteroidales</taxon>
        <taxon>Tannerellaceae</taxon>
        <taxon>Parabacteroides</taxon>
    </lineage>
</organism>
<sequence length="595" mass="66452">MKNIRNFCIIAHIDHGKSTLADRLLEYTKTVEGKDMQAQVLDDMDLERERGITIKSHAIQMKYNYKGEEYILNLIDTPGHVDFSYEVSRSIAACEGALLIVDAAQGIQAQTISNLYMAIENDLEIIPVMNKIDLPSAMPEEVEDQIVELLGCPREDILRASGKTGEGVTEILNTIVEKVPAPKGDPEAPLQCLIFDSVFNPFRGIIAYFKVVNGVIRKGDHVKFIATGKEYDADEVGILKLDMCPREEIRTGDVGYIISGIKTSREVRVGDTITHVSRPAKDAIAGFEEVKPMVFAGVYPIDSEDFENLRASLEKLQLNDASLTFQPESSAALGFGFRCGFLGLLHMEIVQERLDREFNMDVITTVPNVSYIVHTKKGEEIEVHNPGGLPDPTLIDHIDEPFIRASVITNTTYIGPIMTLCLGKRGVLLKQEYISGDRVEIHYDLPLGEIVIDFYDKLKSISKGYASFDYHLHDFRPSKLAKLDILLNGEPVDALSTLTHVDNSVTFGRRMCEKLKELIPRQQFDIAIQAAIGAKIIARETIKAVRKDVTAKCYGGDISRKRKLLEKQKEGKKRMKQIGTVEVPQKAFLAVLKLD</sequence>
<gene>
    <name evidence="1" type="primary">lepA</name>
    <name type="ordered locus">BDI_1475</name>
</gene>
<dbReference type="EC" id="3.6.5.n1" evidence="1"/>
<dbReference type="EMBL" id="CP000140">
    <property type="protein sequence ID" value="ABR43232.1"/>
    <property type="molecule type" value="Genomic_DNA"/>
</dbReference>
<dbReference type="RefSeq" id="WP_005856098.1">
    <property type="nucleotide sequence ID" value="NZ_LR215978.1"/>
</dbReference>
<dbReference type="SMR" id="A6LC18"/>
<dbReference type="STRING" id="435591.BDI_1475"/>
<dbReference type="PaxDb" id="435591-BDI_1475"/>
<dbReference type="KEGG" id="pdi:BDI_1475"/>
<dbReference type="eggNOG" id="COG0481">
    <property type="taxonomic scope" value="Bacteria"/>
</dbReference>
<dbReference type="HOGENOM" id="CLU_009995_3_3_10"/>
<dbReference type="BioCyc" id="PDIS435591:G1G5A-1517-MONOMER"/>
<dbReference type="Proteomes" id="UP000000566">
    <property type="component" value="Chromosome"/>
</dbReference>
<dbReference type="GO" id="GO:0005886">
    <property type="term" value="C:plasma membrane"/>
    <property type="evidence" value="ECO:0007669"/>
    <property type="project" value="UniProtKB-SubCell"/>
</dbReference>
<dbReference type="GO" id="GO:0005525">
    <property type="term" value="F:GTP binding"/>
    <property type="evidence" value="ECO:0007669"/>
    <property type="project" value="UniProtKB-UniRule"/>
</dbReference>
<dbReference type="GO" id="GO:0003924">
    <property type="term" value="F:GTPase activity"/>
    <property type="evidence" value="ECO:0007669"/>
    <property type="project" value="UniProtKB-UniRule"/>
</dbReference>
<dbReference type="GO" id="GO:0043022">
    <property type="term" value="F:ribosome binding"/>
    <property type="evidence" value="ECO:0007669"/>
    <property type="project" value="UniProtKB-UniRule"/>
</dbReference>
<dbReference type="GO" id="GO:0003746">
    <property type="term" value="F:translation elongation factor activity"/>
    <property type="evidence" value="ECO:0007669"/>
    <property type="project" value="UniProtKB-UniRule"/>
</dbReference>
<dbReference type="GO" id="GO:0045727">
    <property type="term" value="P:positive regulation of translation"/>
    <property type="evidence" value="ECO:0007669"/>
    <property type="project" value="UniProtKB-UniRule"/>
</dbReference>
<dbReference type="CDD" id="cd03699">
    <property type="entry name" value="EF4_II"/>
    <property type="match status" value="1"/>
</dbReference>
<dbReference type="CDD" id="cd16260">
    <property type="entry name" value="EF4_III"/>
    <property type="match status" value="1"/>
</dbReference>
<dbReference type="CDD" id="cd01890">
    <property type="entry name" value="LepA"/>
    <property type="match status" value="1"/>
</dbReference>
<dbReference type="CDD" id="cd03709">
    <property type="entry name" value="lepA_C"/>
    <property type="match status" value="1"/>
</dbReference>
<dbReference type="FunFam" id="3.40.50.300:FF:000078">
    <property type="entry name" value="Elongation factor 4"/>
    <property type="match status" value="1"/>
</dbReference>
<dbReference type="FunFam" id="2.40.30.10:FF:000015">
    <property type="entry name" value="Translation factor GUF1, mitochondrial"/>
    <property type="match status" value="1"/>
</dbReference>
<dbReference type="FunFam" id="3.30.70.240:FF:000007">
    <property type="entry name" value="Translation factor GUF1, mitochondrial"/>
    <property type="match status" value="1"/>
</dbReference>
<dbReference type="FunFam" id="3.30.70.2570:FF:000001">
    <property type="entry name" value="Translation factor GUF1, mitochondrial"/>
    <property type="match status" value="1"/>
</dbReference>
<dbReference type="FunFam" id="3.30.70.870:FF:000004">
    <property type="entry name" value="Translation factor GUF1, mitochondrial"/>
    <property type="match status" value="1"/>
</dbReference>
<dbReference type="Gene3D" id="3.30.70.240">
    <property type="match status" value="1"/>
</dbReference>
<dbReference type="Gene3D" id="3.30.70.2570">
    <property type="entry name" value="Elongation factor 4, C-terminal domain"/>
    <property type="match status" value="1"/>
</dbReference>
<dbReference type="Gene3D" id="3.30.70.870">
    <property type="entry name" value="Elongation Factor G (Translational Gtpase), domain 3"/>
    <property type="match status" value="1"/>
</dbReference>
<dbReference type="Gene3D" id="3.40.50.300">
    <property type="entry name" value="P-loop containing nucleotide triphosphate hydrolases"/>
    <property type="match status" value="1"/>
</dbReference>
<dbReference type="Gene3D" id="2.40.30.10">
    <property type="entry name" value="Translation factors"/>
    <property type="match status" value="1"/>
</dbReference>
<dbReference type="HAMAP" id="MF_00071">
    <property type="entry name" value="LepA"/>
    <property type="match status" value="1"/>
</dbReference>
<dbReference type="InterPro" id="IPR006297">
    <property type="entry name" value="EF-4"/>
</dbReference>
<dbReference type="InterPro" id="IPR035647">
    <property type="entry name" value="EFG_III/V"/>
</dbReference>
<dbReference type="InterPro" id="IPR000640">
    <property type="entry name" value="EFG_V-like"/>
</dbReference>
<dbReference type="InterPro" id="IPR004161">
    <property type="entry name" value="EFTu-like_2"/>
</dbReference>
<dbReference type="InterPro" id="IPR038363">
    <property type="entry name" value="LepA_C_sf"/>
</dbReference>
<dbReference type="InterPro" id="IPR013842">
    <property type="entry name" value="LepA_CTD"/>
</dbReference>
<dbReference type="InterPro" id="IPR035654">
    <property type="entry name" value="LepA_IV"/>
</dbReference>
<dbReference type="InterPro" id="IPR027417">
    <property type="entry name" value="P-loop_NTPase"/>
</dbReference>
<dbReference type="InterPro" id="IPR005225">
    <property type="entry name" value="Small_GTP-bd"/>
</dbReference>
<dbReference type="InterPro" id="IPR000795">
    <property type="entry name" value="T_Tr_GTP-bd_dom"/>
</dbReference>
<dbReference type="NCBIfam" id="TIGR01393">
    <property type="entry name" value="lepA"/>
    <property type="match status" value="1"/>
</dbReference>
<dbReference type="NCBIfam" id="TIGR00231">
    <property type="entry name" value="small_GTP"/>
    <property type="match status" value="1"/>
</dbReference>
<dbReference type="PANTHER" id="PTHR43512:SF4">
    <property type="entry name" value="TRANSLATION FACTOR GUF1 HOMOLOG, CHLOROPLASTIC"/>
    <property type="match status" value="1"/>
</dbReference>
<dbReference type="PANTHER" id="PTHR43512">
    <property type="entry name" value="TRANSLATION FACTOR GUF1-RELATED"/>
    <property type="match status" value="1"/>
</dbReference>
<dbReference type="Pfam" id="PF00679">
    <property type="entry name" value="EFG_C"/>
    <property type="match status" value="1"/>
</dbReference>
<dbReference type="Pfam" id="PF00009">
    <property type="entry name" value="GTP_EFTU"/>
    <property type="match status" value="1"/>
</dbReference>
<dbReference type="Pfam" id="PF03144">
    <property type="entry name" value="GTP_EFTU_D2"/>
    <property type="match status" value="1"/>
</dbReference>
<dbReference type="Pfam" id="PF06421">
    <property type="entry name" value="LepA_C"/>
    <property type="match status" value="1"/>
</dbReference>
<dbReference type="PRINTS" id="PR00315">
    <property type="entry name" value="ELONGATNFCT"/>
</dbReference>
<dbReference type="SUPFAM" id="SSF54980">
    <property type="entry name" value="EF-G C-terminal domain-like"/>
    <property type="match status" value="2"/>
</dbReference>
<dbReference type="SUPFAM" id="SSF52540">
    <property type="entry name" value="P-loop containing nucleoside triphosphate hydrolases"/>
    <property type="match status" value="1"/>
</dbReference>
<dbReference type="PROSITE" id="PS51722">
    <property type="entry name" value="G_TR_2"/>
    <property type="match status" value="1"/>
</dbReference>
<evidence type="ECO:0000255" key="1">
    <source>
        <dbReference type="HAMAP-Rule" id="MF_00071"/>
    </source>
</evidence>
<feature type="chain" id="PRO_1000032029" description="Elongation factor 4">
    <location>
        <begin position="1"/>
        <end position="595"/>
    </location>
</feature>
<feature type="domain" description="tr-type G">
    <location>
        <begin position="2"/>
        <end position="183"/>
    </location>
</feature>
<feature type="binding site" evidence="1">
    <location>
        <begin position="14"/>
        <end position="19"/>
    </location>
    <ligand>
        <name>GTP</name>
        <dbReference type="ChEBI" id="CHEBI:37565"/>
    </ligand>
</feature>
<feature type="binding site" evidence="1">
    <location>
        <begin position="130"/>
        <end position="133"/>
    </location>
    <ligand>
        <name>GTP</name>
        <dbReference type="ChEBI" id="CHEBI:37565"/>
    </ligand>
</feature>
<accession>A6LC18</accession>
<reference key="1">
    <citation type="journal article" date="2007" name="PLoS Biol.">
        <title>Evolution of symbiotic bacteria in the distal human intestine.</title>
        <authorList>
            <person name="Xu J."/>
            <person name="Mahowald M.A."/>
            <person name="Ley R.E."/>
            <person name="Lozupone C.A."/>
            <person name="Hamady M."/>
            <person name="Martens E.C."/>
            <person name="Henrissat B."/>
            <person name="Coutinho P.M."/>
            <person name="Minx P."/>
            <person name="Latreille P."/>
            <person name="Cordum H."/>
            <person name="Van Brunt A."/>
            <person name="Kim K."/>
            <person name="Fulton R.S."/>
            <person name="Fulton L.A."/>
            <person name="Clifton S.W."/>
            <person name="Wilson R.K."/>
            <person name="Knight R.D."/>
            <person name="Gordon J.I."/>
        </authorList>
    </citation>
    <scope>NUCLEOTIDE SEQUENCE [LARGE SCALE GENOMIC DNA]</scope>
    <source>
        <strain>ATCC 8503 / DSM 20701 / CIP 104284 / JCM 5825 / NCTC 11152</strain>
    </source>
</reference>